<feature type="chain" id="PRO_0000170616" description="Guanylate kinase">
    <location>
        <begin position="1"/>
        <end position="205"/>
    </location>
</feature>
<feature type="domain" description="Guanylate kinase-like" evidence="1">
    <location>
        <begin position="17"/>
        <end position="195"/>
    </location>
</feature>
<feature type="binding site" evidence="1">
    <location>
        <begin position="24"/>
        <end position="31"/>
    </location>
    <ligand>
        <name>ATP</name>
        <dbReference type="ChEBI" id="CHEBI:30616"/>
    </ligand>
</feature>
<proteinExistence type="inferred from homology"/>
<sequence>MAATFRGTTPVPPDARPRLTVLSGPSGVGKSTVVAHLRTVHPEVWLSVSATTRKPRPGEQHGVQYFFVDDEEFDKLVANGELLEWAEFAGNRYGTPRKAVLDRLEAGEPVLLEIDLQGARQVRESMADAHLVFLAPPSWEELVRRLTGRGTEAPEIIERRLAAAKVELAAETEFDVTLVNTSVEDVSRELLALMLRQSGERDISG</sequence>
<accession>Q8GAU4</accession>
<gene>
    <name evidence="1" type="primary">gmk</name>
</gene>
<protein>
    <recommendedName>
        <fullName evidence="1">Guanylate kinase</fullName>
        <ecNumber evidence="1">2.7.4.8</ecNumber>
    </recommendedName>
    <alternativeName>
        <fullName evidence="1">GMP kinase</fullName>
    </alternativeName>
</protein>
<keyword id="KW-0067">ATP-binding</keyword>
<keyword id="KW-0963">Cytoplasm</keyword>
<keyword id="KW-0418">Kinase</keyword>
<keyword id="KW-0547">Nucleotide-binding</keyword>
<keyword id="KW-0808">Transferase</keyword>
<dbReference type="EC" id="2.7.4.8" evidence="1"/>
<dbReference type="EMBL" id="AB081073">
    <property type="protein sequence ID" value="BAC23144.1"/>
    <property type="molecule type" value="Genomic_DNA"/>
</dbReference>
<dbReference type="RefSeq" id="WP_094794692.1">
    <property type="nucleotide sequence ID" value="NZ_NDXL01000003.1"/>
</dbReference>
<dbReference type="SMR" id="Q8GAU4"/>
<dbReference type="GeneID" id="97372515"/>
<dbReference type="OrthoDB" id="9808150at2"/>
<dbReference type="GO" id="GO:0005829">
    <property type="term" value="C:cytosol"/>
    <property type="evidence" value="ECO:0007669"/>
    <property type="project" value="TreeGrafter"/>
</dbReference>
<dbReference type="GO" id="GO:0005524">
    <property type="term" value="F:ATP binding"/>
    <property type="evidence" value="ECO:0007669"/>
    <property type="project" value="UniProtKB-UniRule"/>
</dbReference>
<dbReference type="GO" id="GO:0004385">
    <property type="term" value="F:guanylate kinase activity"/>
    <property type="evidence" value="ECO:0007669"/>
    <property type="project" value="UniProtKB-UniRule"/>
</dbReference>
<dbReference type="CDD" id="cd00071">
    <property type="entry name" value="GMPK"/>
    <property type="match status" value="1"/>
</dbReference>
<dbReference type="FunFam" id="3.30.63.10:FF:000002">
    <property type="entry name" value="Guanylate kinase 1"/>
    <property type="match status" value="1"/>
</dbReference>
<dbReference type="Gene3D" id="3.30.63.10">
    <property type="entry name" value="Guanylate Kinase phosphate binding domain"/>
    <property type="match status" value="1"/>
</dbReference>
<dbReference type="Gene3D" id="3.40.50.300">
    <property type="entry name" value="P-loop containing nucleotide triphosphate hydrolases"/>
    <property type="match status" value="1"/>
</dbReference>
<dbReference type="HAMAP" id="MF_00328">
    <property type="entry name" value="Guanylate_kinase"/>
    <property type="match status" value="1"/>
</dbReference>
<dbReference type="InterPro" id="IPR008145">
    <property type="entry name" value="GK/Ca_channel_bsu"/>
</dbReference>
<dbReference type="InterPro" id="IPR008144">
    <property type="entry name" value="Guanylate_kin-like_dom"/>
</dbReference>
<dbReference type="InterPro" id="IPR017665">
    <property type="entry name" value="Guanylate_kinase"/>
</dbReference>
<dbReference type="InterPro" id="IPR020590">
    <property type="entry name" value="Guanylate_kinase_CS"/>
</dbReference>
<dbReference type="InterPro" id="IPR027417">
    <property type="entry name" value="P-loop_NTPase"/>
</dbReference>
<dbReference type="NCBIfam" id="TIGR03263">
    <property type="entry name" value="guanyl_kin"/>
    <property type="match status" value="1"/>
</dbReference>
<dbReference type="PANTHER" id="PTHR23117:SF13">
    <property type="entry name" value="GUANYLATE KINASE"/>
    <property type="match status" value="1"/>
</dbReference>
<dbReference type="PANTHER" id="PTHR23117">
    <property type="entry name" value="GUANYLATE KINASE-RELATED"/>
    <property type="match status" value="1"/>
</dbReference>
<dbReference type="Pfam" id="PF00625">
    <property type="entry name" value="Guanylate_kin"/>
    <property type="match status" value="1"/>
</dbReference>
<dbReference type="SMART" id="SM00072">
    <property type="entry name" value="GuKc"/>
    <property type="match status" value="1"/>
</dbReference>
<dbReference type="SUPFAM" id="SSF52540">
    <property type="entry name" value="P-loop containing nucleoside triphosphate hydrolases"/>
    <property type="match status" value="1"/>
</dbReference>
<dbReference type="PROSITE" id="PS00856">
    <property type="entry name" value="GUANYLATE_KINASE_1"/>
    <property type="match status" value="1"/>
</dbReference>
<dbReference type="PROSITE" id="PS50052">
    <property type="entry name" value="GUANYLATE_KINASE_2"/>
    <property type="match status" value="1"/>
</dbReference>
<reference key="1">
    <citation type="journal article" date="2002" name="J. Bacteriol.">
        <title>The rpoZ gene, encoding the RNA polymerase omega subunit, is required for antibiotic production and morphological differentiation in Streptomyces kasugaensis.</title>
        <authorList>
            <person name="Kojima I."/>
            <person name="Kasuga K."/>
            <person name="Kobayashi M."/>
            <person name="Fukasawa A."/>
            <person name="Mizuno S."/>
            <person name="Arisawa A."/>
            <person name="Akagawa H."/>
        </authorList>
    </citation>
    <scope>NUCLEOTIDE SEQUENCE [GENOMIC DNA]</scope>
    <source>
        <strain>A1R6</strain>
    </source>
</reference>
<comment type="function">
    <text evidence="1">Essential for recycling GMP and indirectly, cGMP.</text>
</comment>
<comment type="catalytic activity">
    <reaction evidence="1">
        <text>GMP + ATP = GDP + ADP</text>
        <dbReference type="Rhea" id="RHEA:20780"/>
        <dbReference type="ChEBI" id="CHEBI:30616"/>
        <dbReference type="ChEBI" id="CHEBI:58115"/>
        <dbReference type="ChEBI" id="CHEBI:58189"/>
        <dbReference type="ChEBI" id="CHEBI:456216"/>
        <dbReference type="EC" id="2.7.4.8"/>
    </reaction>
</comment>
<comment type="subcellular location">
    <subcellularLocation>
        <location evidence="1">Cytoplasm</location>
    </subcellularLocation>
</comment>
<comment type="similarity">
    <text evidence="1">Belongs to the guanylate kinase family.</text>
</comment>
<name>KGUA_STRKA</name>
<evidence type="ECO:0000255" key="1">
    <source>
        <dbReference type="HAMAP-Rule" id="MF_00328"/>
    </source>
</evidence>
<organism>
    <name type="scientific">Streptomyces kasugaensis</name>
    <dbReference type="NCBI Taxonomy" id="1946"/>
    <lineage>
        <taxon>Bacteria</taxon>
        <taxon>Bacillati</taxon>
        <taxon>Actinomycetota</taxon>
        <taxon>Actinomycetes</taxon>
        <taxon>Kitasatosporales</taxon>
        <taxon>Streptomycetaceae</taxon>
        <taxon>Streptomyces</taxon>
    </lineage>
</organism>